<feature type="chain" id="PRO_0000178132" description="dITP/XTP pyrophosphatase">
    <location>
        <begin position="1"/>
        <end position="215"/>
    </location>
</feature>
<feature type="active site" description="Proton acceptor" evidence="1">
    <location>
        <position position="74"/>
    </location>
</feature>
<feature type="binding site" evidence="1">
    <location>
        <begin position="13"/>
        <end position="18"/>
    </location>
    <ligand>
        <name>substrate</name>
    </ligand>
</feature>
<feature type="binding site" evidence="1">
    <location>
        <position position="74"/>
    </location>
    <ligand>
        <name>Mg(2+)</name>
        <dbReference type="ChEBI" id="CHEBI:18420"/>
    </ligand>
</feature>
<feature type="binding site" evidence="1">
    <location>
        <position position="75"/>
    </location>
    <ligand>
        <name>substrate</name>
    </ligand>
</feature>
<feature type="binding site" evidence="1">
    <location>
        <begin position="163"/>
        <end position="166"/>
    </location>
    <ligand>
        <name>substrate</name>
    </ligand>
</feature>
<feature type="binding site" evidence="1">
    <location>
        <position position="186"/>
    </location>
    <ligand>
        <name>substrate</name>
    </ligand>
</feature>
<feature type="binding site" evidence="1">
    <location>
        <begin position="199"/>
        <end position="200"/>
    </location>
    <ligand>
        <name>substrate</name>
    </ligand>
</feature>
<dbReference type="EC" id="3.6.1.66" evidence="1"/>
<dbReference type="EMBL" id="BX897700">
    <property type="protein sequence ID" value="CAF25555.1"/>
    <property type="molecule type" value="Genomic_DNA"/>
</dbReference>
<dbReference type="SMR" id="Q6G1E6"/>
<dbReference type="KEGG" id="bqu:BQ00480"/>
<dbReference type="eggNOG" id="COG0127">
    <property type="taxonomic scope" value="Bacteria"/>
</dbReference>
<dbReference type="HOGENOM" id="CLU_082080_0_0_5"/>
<dbReference type="OrthoDB" id="9807456at2"/>
<dbReference type="Proteomes" id="UP000000597">
    <property type="component" value="Chromosome"/>
</dbReference>
<dbReference type="GO" id="GO:0005829">
    <property type="term" value="C:cytosol"/>
    <property type="evidence" value="ECO:0007669"/>
    <property type="project" value="TreeGrafter"/>
</dbReference>
<dbReference type="GO" id="GO:0035870">
    <property type="term" value="F:dITP diphosphatase activity"/>
    <property type="evidence" value="ECO:0007669"/>
    <property type="project" value="RHEA"/>
</dbReference>
<dbReference type="GO" id="GO:0036220">
    <property type="term" value="F:ITP diphosphatase activity"/>
    <property type="evidence" value="ECO:0007669"/>
    <property type="project" value="UniProtKB-EC"/>
</dbReference>
<dbReference type="GO" id="GO:0046872">
    <property type="term" value="F:metal ion binding"/>
    <property type="evidence" value="ECO:0007669"/>
    <property type="project" value="UniProtKB-KW"/>
</dbReference>
<dbReference type="GO" id="GO:0000166">
    <property type="term" value="F:nucleotide binding"/>
    <property type="evidence" value="ECO:0007669"/>
    <property type="project" value="UniProtKB-KW"/>
</dbReference>
<dbReference type="GO" id="GO:0017111">
    <property type="term" value="F:ribonucleoside triphosphate phosphatase activity"/>
    <property type="evidence" value="ECO:0007669"/>
    <property type="project" value="InterPro"/>
</dbReference>
<dbReference type="GO" id="GO:0036222">
    <property type="term" value="F:XTP diphosphatase activity"/>
    <property type="evidence" value="ECO:0007669"/>
    <property type="project" value="RHEA"/>
</dbReference>
<dbReference type="GO" id="GO:0009117">
    <property type="term" value="P:nucleotide metabolic process"/>
    <property type="evidence" value="ECO:0007669"/>
    <property type="project" value="UniProtKB-KW"/>
</dbReference>
<dbReference type="GO" id="GO:0009146">
    <property type="term" value="P:purine nucleoside triphosphate catabolic process"/>
    <property type="evidence" value="ECO:0007669"/>
    <property type="project" value="UniProtKB-UniRule"/>
</dbReference>
<dbReference type="CDD" id="cd00515">
    <property type="entry name" value="HAM1"/>
    <property type="match status" value="1"/>
</dbReference>
<dbReference type="FunFam" id="3.90.950.10:FF:000001">
    <property type="entry name" value="dITP/XTP pyrophosphatase"/>
    <property type="match status" value="1"/>
</dbReference>
<dbReference type="Gene3D" id="3.90.950.10">
    <property type="match status" value="1"/>
</dbReference>
<dbReference type="HAMAP" id="MF_01405">
    <property type="entry name" value="Non_canon_purine_NTPase"/>
    <property type="match status" value="1"/>
</dbReference>
<dbReference type="InterPro" id="IPR020922">
    <property type="entry name" value="dITP/XTP_pyrophosphatase"/>
</dbReference>
<dbReference type="InterPro" id="IPR029001">
    <property type="entry name" value="ITPase-like_fam"/>
</dbReference>
<dbReference type="InterPro" id="IPR002637">
    <property type="entry name" value="RdgB/HAM1"/>
</dbReference>
<dbReference type="NCBIfam" id="TIGR00042">
    <property type="entry name" value="RdgB/HAM1 family non-canonical purine NTP pyrophosphatase"/>
    <property type="match status" value="1"/>
</dbReference>
<dbReference type="PANTHER" id="PTHR11067:SF9">
    <property type="entry name" value="INOSINE TRIPHOSPHATE PYROPHOSPHATASE"/>
    <property type="match status" value="1"/>
</dbReference>
<dbReference type="PANTHER" id="PTHR11067">
    <property type="entry name" value="INOSINE TRIPHOSPHATE PYROPHOSPHATASE/HAM1 PROTEIN"/>
    <property type="match status" value="1"/>
</dbReference>
<dbReference type="Pfam" id="PF01725">
    <property type="entry name" value="Ham1p_like"/>
    <property type="match status" value="1"/>
</dbReference>
<dbReference type="SUPFAM" id="SSF52972">
    <property type="entry name" value="ITPase-like"/>
    <property type="match status" value="1"/>
</dbReference>
<reference key="1">
    <citation type="journal article" date="2004" name="Proc. Natl. Acad. Sci. U.S.A.">
        <title>The louse-borne human pathogen Bartonella quintana is a genomic derivative of the zoonotic agent Bartonella henselae.</title>
        <authorList>
            <person name="Alsmark U.C.M."/>
            <person name="Frank A.C."/>
            <person name="Karlberg E.O."/>
            <person name="Legault B.-A."/>
            <person name="Ardell D.H."/>
            <person name="Canbaeck B."/>
            <person name="Eriksson A.-S."/>
            <person name="Naeslund A.K."/>
            <person name="Handley S.A."/>
            <person name="Huvet M."/>
            <person name="La Scola B."/>
            <person name="Holmberg M."/>
            <person name="Andersson S.G.E."/>
        </authorList>
    </citation>
    <scope>NUCLEOTIDE SEQUENCE [LARGE SCALE GENOMIC DNA]</scope>
    <source>
        <strain>Toulouse</strain>
    </source>
</reference>
<name>IXTPA_BARQU</name>
<gene>
    <name type="ordered locus">BQ00480</name>
</gene>
<evidence type="ECO:0000255" key="1">
    <source>
        <dbReference type="HAMAP-Rule" id="MF_01405"/>
    </source>
</evidence>
<keyword id="KW-0378">Hydrolase</keyword>
<keyword id="KW-0460">Magnesium</keyword>
<keyword id="KW-0479">Metal-binding</keyword>
<keyword id="KW-0546">Nucleotide metabolism</keyword>
<keyword id="KW-0547">Nucleotide-binding</keyword>
<sequence>MRSIASKKLVIATHNTGKLHEITTLVAPFGLEIQSAKELDLPEPKETGVTFEENAYIKAFAAAKNTGLPALSDDSGLEVDALGGAPGVYTADWALQSDGTRNFSKAMQKIEDELQKIGAHEKSQRKARFISVICIAWSDAYADYFRGSVEGTFIWPPRGDKGFGFDPIFLPDGYENTFGEMSTEQKHGWKLNDKTPLSHRARAFKLLAENLLTLS</sequence>
<comment type="function">
    <text evidence="1">Pyrophosphatase that catalyzes the hydrolysis of nucleoside triphosphates to their monophosphate derivatives, with a high preference for the non-canonical purine nucleotides XTP (xanthosine triphosphate), dITP (deoxyinosine triphosphate) and ITP. Seems to function as a house-cleaning enzyme that removes non-canonical purine nucleotides from the nucleotide pool, thus preventing their incorporation into DNA/RNA and avoiding chromosomal lesions.</text>
</comment>
<comment type="catalytic activity">
    <reaction evidence="1">
        <text>XTP + H2O = XMP + diphosphate + H(+)</text>
        <dbReference type="Rhea" id="RHEA:28610"/>
        <dbReference type="ChEBI" id="CHEBI:15377"/>
        <dbReference type="ChEBI" id="CHEBI:15378"/>
        <dbReference type="ChEBI" id="CHEBI:33019"/>
        <dbReference type="ChEBI" id="CHEBI:57464"/>
        <dbReference type="ChEBI" id="CHEBI:61314"/>
        <dbReference type="EC" id="3.6.1.66"/>
    </reaction>
</comment>
<comment type="catalytic activity">
    <reaction evidence="1">
        <text>dITP + H2O = dIMP + diphosphate + H(+)</text>
        <dbReference type="Rhea" id="RHEA:28342"/>
        <dbReference type="ChEBI" id="CHEBI:15377"/>
        <dbReference type="ChEBI" id="CHEBI:15378"/>
        <dbReference type="ChEBI" id="CHEBI:33019"/>
        <dbReference type="ChEBI" id="CHEBI:61194"/>
        <dbReference type="ChEBI" id="CHEBI:61382"/>
        <dbReference type="EC" id="3.6.1.66"/>
    </reaction>
</comment>
<comment type="catalytic activity">
    <reaction evidence="1">
        <text>ITP + H2O = IMP + diphosphate + H(+)</text>
        <dbReference type="Rhea" id="RHEA:29399"/>
        <dbReference type="ChEBI" id="CHEBI:15377"/>
        <dbReference type="ChEBI" id="CHEBI:15378"/>
        <dbReference type="ChEBI" id="CHEBI:33019"/>
        <dbReference type="ChEBI" id="CHEBI:58053"/>
        <dbReference type="ChEBI" id="CHEBI:61402"/>
        <dbReference type="EC" id="3.6.1.66"/>
    </reaction>
</comment>
<comment type="cofactor">
    <cofactor evidence="1">
        <name>Mg(2+)</name>
        <dbReference type="ChEBI" id="CHEBI:18420"/>
    </cofactor>
    <text evidence="1">Binds 1 Mg(2+) ion per subunit.</text>
</comment>
<comment type="subunit">
    <text evidence="1">Homodimer.</text>
</comment>
<comment type="similarity">
    <text evidence="1">Belongs to the HAM1 NTPase family.</text>
</comment>
<protein>
    <recommendedName>
        <fullName evidence="1">dITP/XTP pyrophosphatase</fullName>
        <ecNumber evidence="1">3.6.1.66</ecNumber>
    </recommendedName>
    <alternativeName>
        <fullName evidence="1">Non-canonical purine NTP pyrophosphatase</fullName>
    </alternativeName>
    <alternativeName>
        <fullName evidence="1">Non-standard purine NTP pyrophosphatase</fullName>
    </alternativeName>
    <alternativeName>
        <fullName evidence="1">Nucleoside-triphosphate diphosphatase</fullName>
    </alternativeName>
    <alternativeName>
        <fullName evidence="1">Nucleoside-triphosphate pyrophosphatase</fullName>
        <shortName evidence="1">NTPase</shortName>
    </alternativeName>
</protein>
<accession>Q6G1E6</accession>
<proteinExistence type="inferred from homology"/>
<organism>
    <name type="scientific">Bartonella quintana (strain Toulouse)</name>
    <name type="common">Rochalimaea quintana</name>
    <dbReference type="NCBI Taxonomy" id="283165"/>
    <lineage>
        <taxon>Bacteria</taxon>
        <taxon>Pseudomonadati</taxon>
        <taxon>Pseudomonadota</taxon>
        <taxon>Alphaproteobacteria</taxon>
        <taxon>Hyphomicrobiales</taxon>
        <taxon>Bartonellaceae</taxon>
        <taxon>Bartonella</taxon>
    </lineage>
</organism>